<gene>
    <name evidence="1" type="primary">ppnP</name>
    <name type="ordered locus">PSPA7_3754</name>
</gene>
<dbReference type="EC" id="2.4.2.1" evidence="1"/>
<dbReference type="EC" id="2.4.2.2" evidence="1"/>
<dbReference type="EMBL" id="CP000744">
    <property type="protein sequence ID" value="ABR85126.1"/>
    <property type="molecule type" value="Genomic_DNA"/>
</dbReference>
<dbReference type="RefSeq" id="WP_003154643.1">
    <property type="nucleotide sequence ID" value="NC_009656.1"/>
</dbReference>
<dbReference type="SMR" id="A6V7S3"/>
<dbReference type="GeneID" id="77221806"/>
<dbReference type="KEGG" id="pap:PSPA7_3754"/>
<dbReference type="HOGENOM" id="CLU_157874_0_0_6"/>
<dbReference type="Proteomes" id="UP000001582">
    <property type="component" value="Chromosome"/>
</dbReference>
<dbReference type="GO" id="GO:0005829">
    <property type="term" value="C:cytosol"/>
    <property type="evidence" value="ECO:0007669"/>
    <property type="project" value="TreeGrafter"/>
</dbReference>
<dbReference type="GO" id="GO:0047975">
    <property type="term" value="F:guanosine phosphorylase activity"/>
    <property type="evidence" value="ECO:0007669"/>
    <property type="project" value="UniProtKB-EC"/>
</dbReference>
<dbReference type="GO" id="GO:0004731">
    <property type="term" value="F:purine-nucleoside phosphorylase activity"/>
    <property type="evidence" value="ECO:0007669"/>
    <property type="project" value="UniProtKB-UniRule"/>
</dbReference>
<dbReference type="GO" id="GO:0009032">
    <property type="term" value="F:thymidine phosphorylase activity"/>
    <property type="evidence" value="ECO:0007669"/>
    <property type="project" value="UniProtKB-EC"/>
</dbReference>
<dbReference type="GO" id="GO:0004850">
    <property type="term" value="F:uridine phosphorylase activity"/>
    <property type="evidence" value="ECO:0007669"/>
    <property type="project" value="UniProtKB-EC"/>
</dbReference>
<dbReference type="CDD" id="cd20296">
    <property type="entry name" value="cupin_PpnP-like"/>
    <property type="match status" value="1"/>
</dbReference>
<dbReference type="FunFam" id="2.60.120.10:FF:000016">
    <property type="entry name" value="Pyrimidine/purine nucleoside phosphorylase"/>
    <property type="match status" value="1"/>
</dbReference>
<dbReference type="Gene3D" id="2.60.120.10">
    <property type="entry name" value="Jelly Rolls"/>
    <property type="match status" value="1"/>
</dbReference>
<dbReference type="HAMAP" id="MF_01537">
    <property type="entry name" value="Nucleos_phosphorylase_PpnP"/>
    <property type="match status" value="1"/>
</dbReference>
<dbReference type="InterPro" id="IPR009664">
    <property type="entry name" value="Ppnp"/>
</dbReference>
<dbReference type="InterPro" id="IPR014710">
    <property type="entry name" value="RmlC-like_jellyroll"/>
</dbReference>
<dbReference type="InterPro" id="IPR011051">
    <property type="entry name" value="RmlC_Cupin_sf"/>
</dbReference>
<dbReference type="PANTHER" id="PTHR36540">
    <property type="entry name" value="PYRIMIDINE/PURINE NUCLEOSIDE PHOSPHORYLASE"/>
    <property type="match status" value="1"/>
</dbReference>
<dbReference type="PANTHER" id="PTHR36540:SF1">
    <property type="entry name" value="PYRIMIDINE_PURINE NUCLEOSIDE PHOSPHORYLASE"/>
    <property type="match status" value="1"/>
</dbReference>
<dbReference type="Pfam" id="PF06865">
    <property type="entry name" value="Ppnp"/>
    <property type="match status" value="1"/>
</dbReference>
<dbReference type="SUPFAM" id="SSF51182">
    <property type="entry name" value="RmlC-like cupins"/>
    <property type="match status" value="1"/>
</dbReference>
<comment type="function">
    <text evidence="1">Catalyzes the phosphorolysis of diverse nucleosides, yielding D-ribose 1-phosphate and the respective free bases. Can use uridine, adenosine, guanosine, cytidine, thymidine, inosine and xanthosine as substrates. Also catalyzes the reverse reactions.</text>
</comment>
<comment type="catalytic activity">
    <reaction evidence="1">
        <text>a purine D-ribonucleoside + phosphate = a purine nucleobase + alpha-D-ribose 1-phosphate</text>
        <dbReference type="Rhea" id="RHEA:19805"/>
        <dbReference type="ChEBI" id="CHEBI:26386"/>
        <dbReference type="ChEBI" id="CHEBI:43474"/>
        <dbReference type="ChEBI" id="CHEBI:57720"/>
        <dbReference type="ChEBI" id="CHEBI:142355"/>
        <dbReference type="EC" id="2.4.2.1"/>
    </reaction>
</comment>
<comment type="catalytic activity">
    <reaction evidence="1">
        <text>adenosine + phosphate = alpha-D-ribose 1-phosphate + adenine</text>
        <dbReference type="Rhea" id="RHEA:27642"/>
        <dbReference type="ChEBI" id="CHEBI:16335"/>
        <dbReference type="ChEBI" id="CHEBI:16708"/>
        <dbReference type="ChEBI" id="CHEBI:43474"/>
        <dbReference type="ChEBI" id="CHEBI:57720"/>
        <dbReference type="EC" id="2.4.2.1"/>
    </reaction>
</comment>
<comment type="catalytic activity">
    <reaction evidence="1">
        <text>cytidine + phosphate = cytosine + alpha-D-ribose 1-phosphate</text>
        <dbReference type="Rhea" id="RHEA:52540"/>
        <dbReference type="ChEBI" id="CHEBI:16040"/>
        <dbReference type="ChEBI" id="CHEBI:17562"/>
        <dbReference type="ChEBI" id="CHEBI:43474"/>
        <dbReference type="ChEBI" id="CHEBI:57720"/>
        <dbReference type="EC" id="2.4.2.2"/>
    </reaction>
</comment>
<comment type="catalytic activity">
    <reaction evidence="1">
        <text>guanosine + phosphate = alpha-D-ribose 1-phosphate + guanine</text>
        <dbReference type="Rhea" id="RHEA:13233"/>
        <dbReference type="ChEBI" id="CHEBI:16235"/>
        <dbReference type="ChEBI" id="CHEBI:16750"/>
        <dbReference type="ChEBI" id="CHEBI:43474"/>
        <dbReference type="ChEBI" id="CHEBI:57720"/>
        <dbReference type="EC" id="2.4.2.1"/>
    </reaction>
</comment>
<comment type="catalytic activity">
    <reaction evidence="1">
        <text>inosine + phosphate = alpha-D-ribose 1-phosphate + hypoxanthine</text>
        <dbReference type="Rhea" id="RHEA:27646"/>
        <dbReference type="ChEBI" id="CHEBI:17368"/>
        <dbReference type="ChEBI" id="CHEBI:17596"/>
        <dbReference type="ChEBI" id="CHEBI:43474"/>
        <dbReference type="ChEBI" id="CHEBI:57720"/>
        <dbReference type="EC" id="2.4.2.1"/>
    </reaction>
</comment>
<comment type="catalytic activity">
    <reaction evidence="1">
        <text>thymidine + phosphate = 2-deoxy-alpha-D-ribose 1-phosphate + thymine</text>
        <dbReference type="Rhea" id="RHEA:16037"/>
        <dbReference type="ChEBI" id="CHEBI:17748"/>
        <dbReference type="ChEBI" id="CHEBI:17821"/>
        <dbReference type="ChEBI" id="CHEBI:43474"/>
        <dbReference type="ChEBI" id="CHEBI:57259"/>
        <dbReference type="EC" id="2.4.2.2"/>
    </reaction>
</comment>
<comment type="catalytic activity">
    <reaction evidence="1">
        <text>uridine + phosphate = alpha-D-ribose 1-phosphate + uracil</text>
        <dbReference type="Rhea" id="RHEA:24388"/>
        <dbReference type="ChEBI" id="CHEBI:16704"/>
        <dbReference type="ChEBI" id="CHEBI:17568"/>
        <dbReference type="ChEBI" id="CHEBI:43474"/>
        <dbReference type="ChEBI" id="CHEBI:57720"/>
        <dbReference type="EC" id="2.4.2.2"/>
    </reaction>
</comment>
<comment type="catalytic activity">
    <reaction evidence="1">
        <text>xanthosine + phosphate = alpha-D-ribose 1-phosphate + xanthine</text>
        <dbReference type="Rhea" id="RHEA:27638"/>
        <dbReference type="ChEBI" id="CHEBI:17712"/>
        <dbReference type="ChEBI" id="CHEBI:18107"/>
        <dbReference type="ChEBI" id="CHEBI:43474"/>
        <dbReference type="ChEBI" id="CHEBI:57720"/>
        <dbReference type="EC" id="2.4.2.1"/>
    </reaction>
</comment>
<comment type="similarity">
    <text evidence="1">Belongs to the nucleoside phosphorylase PpnP family.</text>
</comment>
<name>PPNP_PSEP7</name>
<accession>A6V7S3</accession>
<sequence length="93" mass="10153">MFKVNEYFDGTVKSIAFDMTAGPATIGVMAAGEYEFGTSQLEVMHVIAGALTVRLPGSDEWQNFASGSQFTVPANSKFQLKVAQDTAYLCEYR</sequence>
<protein>
    <recommendedName>
        <fullName evidence="1">Pyrimidine/purine nucleoside phosphorylase</fullName>
        <ecNumber evidence="1">2.4.2.1</ecNumber>
        <ecNumber evidence="1">2.4.2.2</ecNumber>
    </recommendedName>
    <alternativeName>
        <fullName evidence="1">Adenosine phosphorylase</fullName>
    </alternativeName>
    <alternativeName>
        <fullName evidence="1">Cytidine phosphorylase</fullName>
    </alternativeName>
    <alternativeName>
        <fullName evidence="1">Guanosine phosphorylase</fullName>
    </alternativeName>
    <alternativeName>
        <fullName evidence="1">Inosine phosphorylase</fullName>
    </alternativeName>
    <alternativeName>
        <fullName evidence="1">Thymidine phosphorylase</fullName>
    </alternativeName>
    <alternativeName>
        <fullName evidence="1">Uridine phosphorylase</fullName>
    </alternativeName>
    <alternativeName>
        <fullName evidence="1">Xanthosine phosphorylase</fullName>
    </alternativeName>
</protein>
<feature type="chain" id="PRO_1000068733" description="Pyrimidine/purine nucleoside phosphorylase">
    <location>
        <begin position="1"/>
        <end position="93"/>
    </location>
</feature>
<proteinExistence type="inferred from homology"/>
<organism>
    <name type="scientific">Pseudomonas paraeruginosa (strain DSM 24068 / PA7)</name>
    <name type="common">Pseudomonas aeruginosa (strain PA7)</name>
    <dbReference type="NCBI Taxonomy" id="381754"/>
    <lineage>
        <taxon>Bacteria</taxon>
        <taxon>Pseudomonadati</taxon>
        <taxon>Pseudomonadota</taxon>
        <taxon>Gammaproteobacteria</taxon>
        <taxon>Pseudomonadales</taxon>
        <taxon>Pseudomonadaceae</taxon>
        <taxon>Pseudomonas</taxon>
        <taxon>Pseudomonas paraeruginosa</taxon>
    </lineage>
</organism>
<reference key="1">
    <citation type="submission" date="2007-06" db="EMBL/GenBank/DDBJ databases">
        <authorList>
            <person name="Dodson R.J."/>
            <person name="Harkins D."/>
            <person name="Paulsen I.T."/>
        </authorList>
    </citation>
    <scope>NUCLEOTIDE SEQUENCE [LARGE SCALE GENOMIC DNA]</scope>
    <source>
        <strain>DSM 24068 / PA7</strain>
    </source>
</reference>
<evidence type="ECO:0000255" key="1">
    <source>
        <dbReference type="HAMAP-Rule" id="MF_01537"/>
    </source>
</evidence>
<keyword id="KW-0328">Glycosyltransferase</keyword>
<keyword id="KW-0808">Transferase</keyword>